<gene>
    <name type="primary">rps12</name>
</gene>
<reference key="1">
    <citation type="submission" date="1994-11" db="EMBL/GenBank/DDBJ databases">
        <title>The ribosomal protein gene rps12 from the plastid genome of the nonphotosynthetic flagellate Astasia longa.</title>
        <authorList>
            <person name="Knauf U."/>
            <person name="Hachtel W."/>
        </authorList>
    </citation>
    <scope>NUCLEOTIDE SEQUENCE [GENOMIC DNA]</scope>
    <source>
        <strain>CCAP 1204-17a</strain>
    </source>
</reference>
<reference key="2">
    <citation type="journal article" date="2000" name="Protist">
        <title>Complete gene map of the plastid genome of the nonphotosynthetic euglenoid flagellate Astasia longa.</title>
        <authorList>
            <person name="Gockel G."/>
            <person name="Hachtel W."/>
        </authorList>
    </citation>
    <scope>NUCLEOTIDE SEQUENCE [LARGE SCALE GENOMIC DNA]</scope>
    <source>
        <strain>CCAP 1204-17a</strain>
    </source>
</reference>
<proteinExistence type="inferred from homology"/>
<sequence length="125" mass="14103">MSTIQQLVRKRRKKIKKKKKLAALDSCPQKKCICLKVHTITPKKPNSALRKVTRVKIISISKMFTTAYIPGIGHNLQEHSMVLIRGGRVKDLPGVKYKVIRGCLDAAGVKNRKNGRSKYGVKRPK</sequence>
<feature type="chain" id="PRO_0000146392" description="Small ribosomal subunit protein uS12c">
    <location>
        <begin position="1"/>
        <end position="125"/>
    </location>
</feature>
<geneLocation type="non-photosynthetic plastid"/>
<keyword id="KW-0934">Plastid</keyword>
<keyword id="KW-0687">Ribonucleoprotein</keyword>
<keyword id="KW-0689">Ribosomal protein</keyword>
<keyword id="KW-0694">RNA-binding</keyword>
<keyword id="KW-0699">rRNA-binding</keyword>
<organism>
    <name type="scientific">Euglena longa</name>
    <name type="common">Euglenophycean alga</name>
    <name type="synonym">Astasia longa</name>
    <dbReference type="NCBI Taxonomy" id="3037"/>
    <lineage>
        <taxon>Eukaryota</taxon>
        <taxon>Discoba</taxon>
        <taxon>Euglenozoa</taxon>
        <taxon>Euglenida</taxon>
        <taxon>Spirocuta</taxon>
        <taxon>Euglenophyceae</taxon>
        <taxon>Euglenales</taxon>
        <taxon>Euglenaceae</taxon>
        <taxon>Euglena</taxon>
    </lineage>
</organism>
<protein>
    <recommendedName>
        <fullName evidence="2">Small ribosomal subunit protein uS12c</fullName>
    </recommendedName>
    <alternativeName>
        <fullName>Plastid 30S ribosomal protein S12</fullName>
    </alternativeName>
</protein>
<evidence type="ECO:0000250" key="1"/>
<evidence type="ECO:0000305" key="2"/>
<comment type="function">
    <text evidence="1">With S4 and S5 plays an important role in translational accuracy. Located at the interface of the 30S and 50S subunits (By similarity).</text>
</comment>
<comment type="subunit">
    <text evidence="1">Part of the 30S ribosomal subunit.</text>
</comment>
<comment type="subcellular location">
    <subcellularLocation>
        <location>Plastid</location>
    </subcellularLocation>
</comment>
<comment type="similarity">
    <text evidence="2">Belongs to the universal ribosomal protein uS12 family.</text>
</comment>
<name>RR12_EUGLO</name>
<dbReference type="EMBL" id="X82630">
    <property type="protein sequence ID" value="CAA57950.1"/>
    <property type="molecule type" value="Genomic_DNA"/>
</dbReference>
<dbReference type="EMBL" id="AJ294725">
    <property type="protein sequence ID" value="CAC24584.1"/>
    <property type="molecule type" value="Genomic_DNA"/>
</dbReference>
<dbReference type="PIR" id="S49603">
    <property type="entry name" value="S49603"/>
</dbReference>
<dbReference type="RefSeq" id="NP_074973.1">
    <property type="nucleotide sequence ID" value="NC_002652.1"/>
</dbReference>
<dbReference type="SMR" id="P46308"/>
<dbReference type="GeneID" id="802503"/>
<dbReference type="GO" id="GO:0009536">
    <property type="term" value="C:plastid"/>
    <property type="evidence" value="ECO:0007669"/>
    <property type="project" value="UniProtKB-SubCell"/>
</dbReference>
<dbReference type="GO" id="GO:0015935">
    <property type="term" value="C:small ribosomal subunit"/>
    <property type="evidence" value="ECO:0007669"/>
    <property type="project" value="InterPro"/>
</dbReference>
<dbReference type="GO" id="GO:0019843">
    <property type="term" value="F:rRNA binding"/>
    <property type="evidence" value="ECO:0007669"/>
    <property type="project" value="UniProtKB-KW"/>
</dbReference>
<dbReference type="GO" id="GO:0003735">
    <property type="term" value="F:structural constituent of ribosome"/>
    <property type="evidence" value="ECO:0007669"/>
    <property type="project" value="InterPro"/>
</dbReference>
<dbReference type="GO" id="GO:0006412">
    <property type="term" value="P:translation"/>
    <property type="evidence" value="ECO:0007669"/>
    <property type="project" value="InterPro"/>
</dbReference>
<dbReference type="CDD" id="cd03368">
    <property type="entry name" value="Ribosomal_S12"/>
    <property type="match status" value="1"/>
</dbReference>
<dbReference type="FunFam" id="2.40.50.140:FF:000099">
    <property type="entry name" value="Ribosomal protein S12, mitochondrial"/>
    <property type="match status" value="1"/>
</dbReference>
<dbReference type="Gene3D" id="2.40.50.140">
    <property type="entry name" value="Nucleic acid-binding proteins"/>
    <property type="match status" value="1"/>
</dbReference>
<dbReference type="HAMAP" id="MF_00403_B">
    <property type="entry name" value="Ribosomal_uS12_B"/>
    <property type="match status" value="1"/>
</dbReference>
<dbReference type="InterPro" id="IPR012340">
    <property type="entry name" value="NA-bd_OB-fold"/>
</dbReference>
<dbReference type="InterPro" id="IPR006032">
    <property type="entry name" value="Ribosomal_uS12"/>
</dbReference>
<dbReference type="InterPro" id="IPR005679">
    <property type="entry name" value="Ribosomal_uS12_bac"/>
</dbReference>
<dbReference type="NCBIfam" id="TIGR00981">
    <property type="entry name" value="rpsL_bact"/>
    <property type="match status" value="1"/>
</dbReference>
<dbReference type="PANTHER" id="PTHR11652">
    <property type="entry name" value="30S RIBOSOMAL PROTEIN S12 FAMILY MEMBER"/>
    <property type="match status" value="1"/>
</dbReference>
<dbReference type="Pfam" id="PF00164">
    <property type="entry name" value="Ribosom_S12_S23"/>
    <property type="match status" value="1"/>
</dbReference>
<dbReference type="PIRSF" id="PIRSF002133">
    <property type="entry name" value="Ribosomal_S12/S23"/>
    <property type="match status" value="1"/>
</dbReference>
<dbReference type="PRINTS" id="PR01034">
    <property type="entry name" value="RIBOSOMALS12"/>
</dbReference>
<dbReference type="SUPFAM" id="SSF50249">
    <property type="entry name" value="Nucleic acid-binding proteins"/>
    <property type="match status" value="1"/>
</dbReference>
<dbReference type="PROSITE" id="PS00055">
    <property type="entry name" value="RIBOSOMAL_S12"/>
    <property type="match status" value="1"/>
</dbReference>
<accession>P46308</accession>